<name>SMIP6_HUMAN</name>
<dbReference type="EMBL" id="AF367474">
    <property type="protein sequence ID" value="AAK53410.1"/>
    <property type="molecule type" value="mRNA"/>
</dbReference>
<dbReference type="EMBL" id="AK058087">
    <property type="protein sequence ID" value="BAB71657.1"/>
    <property type="molecule type" value="mRNA"/>
</dbReference>
<dbReference type="EMBL" id="AK094751">
    <property type="protein sequence ID" value="BAC04412.1"/>
    <property type="molecule type" value="mRNA"/>
</dbReference>
<dbReference type="EMBL" id="AL356494">
    <property type="status" value="NOT_ANNOTATED_CDS"/>
    <property type="molecule type" value="Genomic_DNA"/>
</dbReference>
<dbReference type="EMBL" id="BC022084">
    <property type="protein sequence ID" value="AAH22084.1"/>
    <property type="molecule type" value="mRNA"/>
</dbReference>
<dbReference type="EMBL" id="BC029484">
    <property type="protein sequence ID" value="AAH29484.1"/>
    <property type="molecule type" value="mRNA"/>
</dbReference>
<dbReference type="CCDS" id="CCDS59121.1">
    <molecule id="Q8NCR6-4"/>
</dbReference>
<dbReference type="CCDS" id="CCDS6553.1">
    <molecule id="Q8NCR6-3"/>
</dbReference>
<dbReference type="CCDS" id="CCDS6554.1">
    <molecule id="Q8NCR6-1"/>
</dbReference>
<dbReference type="CCDS" id="CCDS6555.1">
    <molecule id="Q8NCR6-5"/>
</dbReference>
<dbReference type="RefSeq" id="NP_001239124.1">
    <molecule id="Q8NCR6-4"/>
    <property type="nucleotide sequence ID" value="NM_001252195.2"/>
</dbReference>
<dbReference type="RefSeq" id="NP_115985.2">
    <molecule id="Q8NCR6-1"/>
    <property type="nucleotide sequence ID" value="NM_032596.3"/>
</dbReference>
<dbReference type="RefSeq" id="NP_671697.1">
    <molecule id="Q8NCR6-5"/>
    <property type="nucleotide sequence ID" value="NM_147168.2"/>
</dbReference>
<dbReference type="RefSeq" id="NP_671698.1">
    <molecule id="Q8NCR6-3"/>
    <property type="nucleotide sequence ID" value="NM_147169.3"/>
</dbReference>
<dbReference type="RefSeq" id="XP_005251675.1">
    <molecule id="Q8NCR6-4"/>
    <property type="nucleotide sequence ID" value="XM_005251618.5"/>
</dbReference>
<dbReference type="RefSeq" id="XP_011516357.1">
    <molecule id="Q8NCR6-4"/>
    <property type="nucleotide sequence ID" value="XM_011518055.3"/>
</dbReference>
<dbReference type="RefSeq" id="XP_054219995.1">
    <molecule id="Q8NCR6-4"/>
    <property type="nucleotide sequence ID" value="XM_054364020.1"/>
</dbReference>
<dbReference type="RefSeq" id="XP_054219996.1">
    <molecule id="Q8NCR6-4"/>
    <property type="nucleotide sequence ID" value="XM_054364021.1"/>
</dbReference>
<dbReference type="SMR" id="Q8NCR6"/>
<dbReference type="BioGRID" id="124203">
    <property type="interactions" value="39"/>
</dbReference>
<dbReference type="FunCoup" id="Q8NCR6">
    <property type="interactions" value="379"/>
</dbReference>
<dbReference type="IntAct" id="Q8NCR6">
    <property type="interactions" value="31"/>
</dbReference>
<dbReference type="STRING" id="9606.ENSP00000297623"/>
<dbReference type="iPTMnet" id="Q8NCR6"/>
<dbReference type="PhosphoSitePlus" id="Q8NCR6"/>
<dbReference type="BioMuta" id="C9orf24"/>
<dbReference type="DMDM" id="156630925"/>
<dbReference type="MassIVE" id="Q8NCR6"/>
<dbReference type="PaxDb" id="9606-ENSP00000297623"/>
<dbReference type="PeptideAtlas" id="Q8NCR6"/>
<dbReference type="ProteomicsDB" id="72928">
    <molecule id="Q8NCR6-1"/>
</dbReference>
<dbReference type="ProteomicsDB" id="72929">
    <molecule id="Q8NCR6-2"/>
</dbReference>
<dbReference type="ProteomicsDB" id="72930">
    <molecule id="Q8NCR6-3"/>
</dbReference>
<dbReference type="ProteomicsDB" id="72931">
    <molecule id="Q8NCR6-4"/>
</dbReference>
<dbReference type="ProteomicsDB" id="72932">
    <molecule id="Q8NCR6-5"/>
</dbReference>
<dbReference type="Antibodypedia" id="55618">
    <property type="antibodies" value="20 antibodies from 12 providers"/>
</dbReference>
<dbReference type="DNASU" id="84688"/>
<dbReference type="Ensembl" id="ENST00000297623.7">
    <molecule id="Q8NCR6-1"/>
    <property type="protein sequence ID" value="ENSP00000297623.2"/>
    <property type="gene ID" value="ENSG00000164972.14"/>
</dbReference>
<dbReference type="Ensembl" id="ENST00000379124.5">
    <molecule id="Q8NCR6-4"/>
    <property type="protein sequence ID" value="ENSP00000368419.1"/>
    <property type="gene ID" value="ENSG00000164972.14"/>
</dbReference>
<dbReference type="Ensembl" id="ENST00000379126.7">
    <molecule id="Q8NCR6-3"/>
    <property type="protein sequence ID" value="ENSP00000368421.3"/>
    <property type="gene ID" value="ENSG00000164972.14"/>
</dbReference>
<dbReference type="Ensembl" id="ENST00000379127.1">
    <molecule id="Q8NCR6-4"/>
    <property type="protein sequence ID" value="ENSP00000368422.1"/>
    <property type="gene ID" value="ENSG00000164972.14"/>
</dbReference>
<dbReference type="Ensembl" id="ENST00000379133.7">
    <molecule id="Q8NCR6-5"/>
    <property type="protein sequence ID" value="ENSP00000368428.3"/>
    <property type="gene ID" value="ENSG00000164972.14"/>
</dbReference>
<dbReference type="GeneID" id="84688"/>
<dbReference type="KEGG" id="hsa:84688"/>
<dbReference type="MANE-Select" id="ENST00000297623.7">
    <property type="protein sequence ID" value="ENSP00000297623.2"/>
    <property type="RefSeq nucleotide sequence ID" value="NM_032596.4"/>
    <property type="RefSeq protein sequence ID" value="NP_115985.2"/>
</dbReference>
<dbReference type="UCSC" id="uc003zuf.3">
    <molecule id="Q8NCR6-1"/>
    <property type="organism name" value="human"/>
</dbReference>
<dbReference type="AGR" id="HGNC:19919"/>
<dbReference type="CTD" id="84688"/>
<dbReference type="DisGeNET" id="84688"/>
<dbReference type="GeneCards" id="SPMIP6"/>
<dbReference type="HGNC" id="HGNC:19919">
    <property type="gene designation" value="SPMIP6"/>
</dbReference>
<dbReference type="HPA" id="ENSG00000164972">
    <property type="expression patterns" value="Group enriched (brain, choroid plexus, fallopian tube, testis)"/>
</dbReference>
<dbReference type="MIM" id="619502">
    <property type="type" value="gene"/>
</dbReference>
<dbReference type="neXtProt" id="NX_Q8NCR6"/>
<dbReference type="OpenTargets" id="ENSG00000164972"/>
<dbReference type="PharmGKB" id="PA134950467"/>
<dbReference type="VEuPathDB" id="HostDB:ENSG00000164972"/>
<dbReference type="eggNOG" id="ENOG502QRFQ">
    <property type="taxonomic scope" value="Eukaryota"/>
</dbReference>
<dbReference type="GeneTree" id="ENSGT00390000000945"/>
<dbReference type="HOGENOM" id="CLU_1618452_0_0_1"/>
<dbReference type="InParanoid" id="Q8NCR6"/>
<dbReference type="OMA" id="QTMERHV"/>
<dbReference type="OrthoDB" id="9820464at2759"/>
<dbReference type="PAN-GO" id="Q8NCR6">
    <property type="GO annotations" value="3 GO annotations based on evolutionary models"/>
</dbReference>
<dbReference type="PhylomeDB" id="Q8NCR6"/>
<dbReference type="TreeFam" id="TF335656"/>
<dbReference type="PathwayCommons" id="Q8NCR6"/>
<dbReference type="SignaLink" id="Q8NCR6"/>
<dbReference type="BioGRID-ORCS" id="84688">
    <property type="hits" value="33 hits in 1129 CRISPR screens"/>
</dbReference>
<dbReference type="ChiTaRS" id="C9orf24">
    <property type="organism name" value="human"/>
</dbReference>
<dbReference type="GenomeRNAi" id="84688"/>
<dbReference type="Pharos" id="Q8NCR6">
    <property type="development level" value="Tdark"/>
</dbReference>
<dbReference type="PRO" id="PR:Q8NCR6"/>
<dbReference type="Proteomes" id="UP000005640">
    <property type="component" value="Chromosome 9"/>
</dbReference>
<dbReference type="RNAct" id="Q8NCR6">
    <property type="molecule type" value="protein"/>
</dbReference>
<dbReference type="Bgee" id="ENSG00000164972">
    <property type="expression patterns" value="Expressed in bronchial epithelial cell and 124 other cell types or tissues"/>
</dbReference>
<dbReference type="ExpressionAtlas" id="Q8NCR6">
    <property type="expression patterns" value="baseline and differential"/>
</dbReference>
<dbReference type="GO" id="GO:0160111">
    <property type="term" value="C:axonemal A tubule inner sheath"/>
    <property type="evidence" value="ECO:0007669"/>
    <property type="project" value="Ensembl"/>
</dbReference>
<dbReference type="GO" id="GO:0005829">
    <property type="term" value="C:cytosol"/>
    <property type="evidence" value="ECO:0000314"/>
    <property type="project" value="HPA"/>
</dbReference>
<dbReference type="GO" id="GO:0002177">
    <property type="term" value="C:manchette"/>
    <property type="evidence" value="ECO:0000250"/>
    <property type="project" value="UniProtKB"/>
</dbReference>
<dbReference type="GO" id="GO:0005739">
    <property type="term" value="C:mitochondrion"/>
    <property type="evidence" value="ECO:0000250"/>
    <property type="project" value="UniProtKB"/>
</dbReference>
<dbReference type="GO" id="GO:0005654">
    <property type="term" value="C:nucleoplasm"/>
    <property type="evidence" value="ECO:0000314"/>
    <property type="project" value="HPA"/>
</dbReference>
<dbReference type="GO" id="GO:0005634">
    <property type="term" value="C:nucleus"/>
    <property type="evidence" value="ECO:0000314"/>
    <property type="project" value="UniProtKB"/>
</dbReference>
<dbReference type="GO" id="GO:0048471">
    <property type="term" value="C:perinuclear region of cytoplasm"/>
    <property type="evidence" value="ECO:0000314"/>
    <property type="project" value="UniProtKB"/>
</dbReference>
<dbReference type="GO" id="GO:0097225">
    <property type="term" value="C:sperm midpiece"/>
    <property type="evidence" value="ECO:0000250"/>
    <property type="project" value="UniProtKB"/>
</dbReference>
<dbReference type="GO" id="GO:0043014">
    <property type="term" value="F:alpha-tubulin binding"/>
    <property type="evidence" value="ECO:0000318"/>
    <property type="project" value="GO_Central"/>
</dbReference>
<dbReference type="GO" id="GO:0030154">
    <property type="term" value="P:cell differentiation"/>
    <property type="evidence" value="ECO:0007669"/>
    <property type="project" value="UniProtKB-KW"/>
</dbReference>
<dbReference type="GO" id="GO:0030317">
    <property type="term" value="P:flagellated sperm motility"/>
    <property type="evidence" value="ECO:0007669"/>
    <property type="project" value="Ensembl"/>
</dbReference>
<dbReference type="GO" id="GO:0065003">
    <property type="term" value="P:protein-containing complex assembly"/>
    <property type="evidence" value="ECO:0007669"/>
    <property type="project" value="Ensembl"/>
</dbReference>
<dbReference type="GO" id="GO:0007283">
    <property type="term" value="P:spermatogenesis"/>
    <property type="evidence" value="ECO:0007669"/>
    <property type="project" value="UniProtKB-KW"/>
</dbReference>
<dbReference type="InterPro" id="IPR028195">
    <property type="entry name" value="SPMIP6"/>
</dbReference>
<dbReference type="PANTHER" id="PTHR35664">
    <property type="entry name" value="SPERMATID-SPECIFIC MANCHETTE-RELATED PROTEIN 1"/>
    <property type="match status" value="1"/>
</dbReference>
<dbReference type="PANTHER" id="PTHR35664:SF1">
    <property type="entry name" value="SPERMATID-SPECIFIC MANCHETTE-RELATED PROTEIN 1"/>
    <property type="match status" value="1"/>
</dbReference>
<dbReference type="Pfam" id="PF15181">
    <property type="entry name" value="SMRP1"/>
    <property type="match status" value="1"/>
</dbReference>
<accession>Q8NCR6</accession>
<accession>Q5T598</accession>
<accession>Q5T599</accession>
<accession>Q5T5A0</accession>
<accession>Q8N9G4</accession>
<accession>Q96KD1</accession>
<accession>Q96LN1</accession>
<evidence type="ECO:0000250" key="1">
    <source>
        <dbReference type="UniProtKB" id="Q2MH31"/>
    </source>
</evidence>
<evidence type="ECO:0000269" key="2">
    <source>
    </source>
</evidence>
<evidence type="ECO:0000269" key="3">
    <source>
    </source>
</evidence>
<evidence type="ECO:0000269" key="4">
    <source>
    </source>
</evidence>
<evidence type="ECO:0000269" key="5">
    <source>
    </source>
</evidence>
<evidence type="ECO:0000303" key="6">
    <source>
    </source>
</evidence>
<evidence type="ECO:0000303" key="7">
    <source>
    </source>
</evidence>
<evidence type="ECO:0000303" key="8">
    <source ref="2"/>
</evidence>
<evidence type="ECO:0000305" key="9"/>
<evidence type="ECO:0000312" key="10">
    <source>
        <dbReference type="HGNC" id="HGNC:19919"/>
    </source>
</evidence>
<proteinExistence type="evidence at protein level"/>
<protein>
    <recommendedName>
        <fullName evidence="10">Sperm microtubule inner protein 6</fullName>
    </recommendedName>
    <alternativeName>
        <fullName>Ciliated bronchial epithelial protein 1</fullName>
    </alternativeName>
    <alternativeName>
        <fullName>Spermatid-specific manchette-related protein 1</fullName>
    </alternativeName>
    <alternativeName>
        <fullName>Testis development protein NYD-SP22</fullName>
    </alternativeName>
</protein>
<organism>
    <name type="scientific">Homo sapiens</name>
    <name type="common">Human</name>
    <dbReference type="NCBI Taxonomy" id="9606"/>
    <lineage>
        <taxon>Eukaryota</taxon>
        <taxon>Metazoa</taxon>
        <taxon>Chordata</taxon>
        <taxon>Craniata</taxon>
        <taxon>Vertebrata</taxon>
        <taxon>Euteleostomi</taxon>
        <taxon>Mammalia</taxon>
        <taxon>Eutheria</taxon>
        <taxon>Euarchontoglires</taxon>
        <taxon>Primates</taxon>
        <taxon>Haplorrhini</taxon>
        <taxon>Catarrhini</taxon>
        <taxon>Hominidae</taxon>
        <taxon>Homo</taxon>
    </lineage>
</organism>
<gene>
    <name evidence="10" type="primary">SPMIP6</name>
    <name type="synonym">C9orf24</name>
    <name evidence="7" type="synonym">CBE1</name>
    <name type="synonym">SMRP1</name>
</gene>
<sequence length="262" mass="30167">MFLFSRKTRTPISTYSDSYRAPTSIKEVYKDPPLCAWEANKFLTPGLTHTMERHVDPEALQKMAKCAVQDYTYRGSISGHPYLPEKYWLSQEEADKCSPNYLGSDWYNTWRMEPYNSSCCNKYTTYLPRLPKEARMETAVRGMPLECPPRPERLNAYEREVMVNMLNSLSRNQQLPRITPRCGCVDPLPGRLPFHGYESACSGRHYCLRGMDYYASGAPCTDRRLRPWCREQPTMCTSLRAPARNAVCCYNSPAVILPISEP</sequence>
<keyword id="KW-0025">Alternative splicing</keyword>
<keyword id="KW-0966">Cell projection</keyword>
<keyword id="KW-0969">Cilium</keyword>
<keyword id="KW-0963">Cytoplasm</keyword>
<keyword id="KW-0206">Cytoskeleton</keyword>
<keyword id="KW-0221">Differentiation</keyword>
<keyword id="KW-0282">Flagellum</keyword>
<keyword id="KW-0496">Mitochondrion</keyword>
<keyword id="KW-0539">Nucleus</keyword>
<keyword id="KW-1267">Proteomics identification</keyword>
<keyword id="KW-1185">Reference proteome</keyword>
<keyword id="KW-0744">Spermatogenesis</keyword>
<reference key="1">
    <citation type="journal article" date="2004" name="Am. J. Respir. Cell Mol. Biol.">
        <title>Characterization of ciliated bronchial epithelium 1, a ciliated cell-associated gene induced during mucociliary differentiation.</title>
        <authorList>
            <person name="Yoshisue H."/>
            <person name="Puddicombe S.M."/>
            <person name="Wilson S.J."/>
            <person name="Haitchi H.M."/>
            <person name="Powell R.M."/>
            <person name="Wilson D.I."/>
            <person name="Pandit A."/>
            <person name="Berger A.E."/>
            <person name="Davies D.E."/>
            <person name="Holgate S.T."/>
            <person name="Holloway J.W."/>
        </authorList>
    </citation>
    <scope>NUCLEOTIDE SEQUENCE [MRNA] (ISOFORMS 4 AND 5)</scope>
    <scope>FUNCTION</scope>
    <scope>SUBCELLULAR LOCATION</scope>
    <scope>TISSUE SPECIFICITY</scope>
    <scope>DEVELOPMENTAL STAGE</scope>
    <scope>INDUCTION</scope>
    <scope>MUTAGENESIS OF 223-ARG-ARG-224</scope>
    <source>
        <tissue>Bronchus</tissue>
    </source>
</reference>
<reference key="2">
    <citation type="submission" date="2001-04" db="EMBL/GenBank/DDBJ databases">
        <title>A new testis development gene NYD-SP22 from human testes.</title>
        <authorList>
            <person name="Sha J.H."/>
            <person name="Zhou Z.M."/>
            <person name="Li J.M."/>
        </authorList>
    </citation>
    <scope>NUCLEOTIDE SEQUENCE [MRNA] (ISOFORM 3)</scope>
    <source>
        <tissue>Testis</tissue>
    </source>
</reference>
<reference key="3">
    <citation type="journal article" date="2004" name="Nat. Genet.">
        <title>Complete sequencing and characterization of 21,243 full-length human cDNAs.</title>
        <authorList>
            <person name="Ota T."/>
            <person name="Suzuki Y."/>
            <person name="Nishikawa T."/>
            <person name="Otsuki T."/>
            <person name="Sugiyama T."/>
            <person name="Irie R."/>
            <person name="Wakamatsu A."/>
            <person name="Hayashi K."/>
            <person name="Sato H."/>
            <person name="Nagai K."/>
            <person name="Kimura K."/>
            <person name="Makita H."/>
            <person name="Sekine M."/>
            <person name="Obayashi M."/>
            <person name="Nishi T."/>
            <person name="Shibahara T."/>
            <person name="Tanaka T."/>
            <person name="Ishii S."/>
            <person name="Yamamoto J."/>
            <person name="Saito K."/>
            <person name="Kawai Y."/>
            <person name="Isono Y."/>
            <person name="Nakamura Y."/>
            <person name="Nagahari K."/>
            <person name="Murakami K."/>
            <person name="Yasuda T."/>
            <person name="Iwayanagi T."/>
            <person name="Wagatsuma M."/>
            <person name="Shiratori A."/>
            <person name="Sudo H."/>
            <person name="Hosoiri T."/>
            <person name="Kaku Y."/>
            <person name="Kodaira H."/>
            <person name="Kondo H."/>
            <person name="Sugawara M."/>
            <person name="Takahashi M."/>
            <person name="Kanda K."/>
            <person name="Yokoi T."/>
            <person name="Furuya T."/>
            <person name="Kikkawa E."/>
            <person name="Omura Y."/>
            <person name="Abe K."/>
            <person name="Kamihara K."/>
            <person name="Katsuta N."/>
            <person name="Sato K."/>
            <person name="Tanikawa M."/>
            <person name="Yamazaki M."/>
            <person name="Ninomiya K."/>
            <person name="Ishibashi T."/>
            <person name="Yamashita H."/>
            <person name="Murakawa K."/>
            <person name="Fujimori K."/>
            <person name="Tanai H."/>
            <person name="Kimata M."/>
            <person name="Watanabe M."/>
            <person name="Hiraoka S."/>
            <person name="Chiba Y."/>
            <person name="Ishida S."/>
            <person name="Ono Y."/>
            <person name="Takiguchi S."/>
            <person name="Watanabe S."/>
            <person name="Yosida M."/>
            <person name="Hotuta T."/>
            <person name="Kusano J."/>
            <person name="Kanehori K."/>
            <person name="Takahashi-Fujii A."/>
            <person name="Hara H."/>
            <person name="Tanase T.-O."/>
            <person name="Nomura Y."/>
            <person name="Togiya S."/>
            <person name="Komai F."/>
            <person name="Hara R."/>
            <person name="Takeuchi K."/>
            <person name="Arita M."/>
            <person name="Imose N."/>
            <person name="Musashino K."/>
            <person name="Yuuki H."/>
            <person name="Oshima A."/>
            <person name="Sasaki N."/>
            <person name="Aotsuka S."/>
            <person name="Yoshikawa Y."/>
            <person name="Matsunawa H."/>
            <person name="Ichihara T."/>
            <person name="Shiohata N."/>
            <person name="Sano S."/>
            <person name="Moriya S."/>
            <person name="Momiyama H."/>
            <person name="Satoh N."/>
            <person name="Takami S."/>
            <person name="Terashima Y."/>
            <person name="Suzuki O."/>
            <person name="Nakagawa S."/>
            <person name="Senoh A."/>
            <person name="Mizoguchi H."/>
            <person name="Goto Y."/>
            <person name="Shimizu F."/>
            <person name="Wakebe H."/>
            <person name="Hishigaki H."/>
            <person name="Watanabe T."/>
            <person name="Sugiyama A."/>
            <person name="Takemoto M."/>
            <person name="Kawakami B."/>
            <person name="Yamazaki M."/>
            <person name="Watanabe K."/>
            <person name="Kumagai A."/>
            <person name="Itakura S."/>
            <person name="Fukuzumi Y."/>
            <person name="Fujimori Y."/>
            <person name="Komiyama M."/>
            <person name="Tashiro H."/>
            <person name="Tanigami A."/>
            <person name="Fujiwara T."/>
            <person name="Ono T."/>
            <person name="Yamada K."/>
            <person name="Fujii Y."/>
            <person name="Ozaki K."/>
            <person name="Hirao M."/>
            <person name="Ohmori Y."/>
            <person name="Kawabata A."/>
            <person name="Hikiji T."/>
            <person name="Kobatake N."/>
            <person name="Inagaki H."/>
            <person name="Ikema Y."/>
            <person name="Okamoto S."/>
            <person name="Okitani R."/>
            <person name="Kawakami T."/>
            <person name="Noguchi S."/>
            <person name="Itoh T."/>
            <person name="Shigeta K."/>
            <person name="Senba T."/>
            <person name="Matsumura K."/>
            <person name="Nakajima Y."/>
            <person name="Mizuno T."/>
            <person name="Morinaga M."/>
            <person name="Sasaki M."/>
            <person name="Togashi T."/>
            <person name="Oyama M."/>
            <person name="Hata H."/>
            <person name="Watanabe M."/>
            <person name="Komatsu T."/>
            <person name="Mizushima-Sugano J."/>
            <person name="Satoh T."/>
            <person name="Shirai Y."/>
            <person name="Takahashi Y."/>
            <person name="Nakagawa K."/>
            <person name="Okumura K."/>
            <person name="Nagase T."/>
            <person name="Nomura N."/>
            <person name="Kikuchi H."/>
            <person name="Masuho Y."/>
            <person name="Yamashita R."/>
            <person name="Nakai K."/>
            <person name="Yada T."/>
            <person name="Nakamura Y."/>
            <person name="Ohara O."/>
            <person name="Isogai T."/>
            <person name="Sugano S."/>
        </authorList>
    </citation>
    <scope>NUCLEOTIDE SEQUENCE [LARGE SCALE MRNA] (ISOFORMS 1 AND 2)</scope>
    <source>
        <tissue>Brain</tissue>
        <tissue>Testis</tissue>
    </source>
</reference>
<reference key="4">
    <citation type="journal article" date="2004" name="Nature">
        <title>DNA sequence and analysis of human chromosome 9.</title>
        <authorList>
            <person name="Humphray S.J."/>
            <person name="Oliver K."/>
            <person name="Hunt A.R."/>
            <person name="Plumb R.W."/>
            <person name="Loveland J.E."/>
            <person name="Howe K.L."/>
            <person name="Andrews T.D."/>
            <person name="Searle S."/>
            <person name="Hunt S.E."/>
            <person name="Scott C.E."/>
            <person name="Jones M.C."/>
            <person name="Ainscough R."/>
            <person name="Almeida J.P."/>
            <person name="Ambrose K.D."/>
            <person name="Ashwell R.I.S."/>
            <person name="Babbage A.K."/>
            <person name="Babbage S."/>
            <person name="Bagguley C.L."/>
            <person name="Bailey J."/>
            <person name="Banerjee R."/>
            <person name="Barker D.J."/>
            <person name="Barlow K.F."/>
            <person name="Bates K."/>
            <person name="Beasley H."/>
            <person name="Beasley O."/>
            <person name="Bird C.P."/>
            <person name="Bray-Allen S."/>
            <person name="Brown A.J."/>
            <person name="Brown J.Y."/>
            <person name="Burford D."/>
            <person name="Burrill W."/>
            <person name="Burton J."/>
            <person name="Carder C."/>
            <person name="Carter N.P."/>
            <person name="Chapman J.C."/>
            <person name="Chen Y."/>
            <person name="Clarke G."/>
            <person name="Clark S.Y."/>
            <person name="Clee C.M."/>
            <person name="Clegg S."/>
            <person name="Collier R.E."/>
            <person name="Corby N."/>
            <person name="Crosier M."/>
            <person name="Cummings A.T."/>
            <person name="Davies J."/>
            <person name="Dhami P."/>
            <person name="Dunn M."/>
            <person name="Dutta I."/>
            <person name="Dyer L.W."/>
            <person name="Earthrowl M.E."/>
            <person name="Faulkner L."/>
            <person name="Fleming C.J."/>
            <person name="Frankish A."/>
            <person name="Frankland J.A."/>
            <person name="French L."/>
            <person name="Fricker D.G."/>
            <person name="Garner P."/>
            <person name="Garnett J."/>
            <person name="Ghori J."/>
            <person name="Gilbert J.G.R."/>
            <person name="Glison C."/>
            <person name="Grafham D.V."/>
            <person name="Gribble S."/>
            <person name="Griffiths C."/>
            <person name="Griffiths-Jones S."/>
            <person name="Grocock R."/>
            <person name="Guy J."/>
            <person name="Hall R.E."/>
            <person name="Hammond S."/>
            <person name="Harley J.L."/>
            <person name="Harrison E.S.I."/>
            <person name="Hart E.A."/>
            <person name="Heath P.D."/>
            <person name="Henderson C.D."/>
            <person name="Hopkins B.L."/>
            <person name="Howard P.J."/>
            <person name="Howden P.J."/>
            <person name="Huckle E."/>
            <person name="Johnson C."/>
            <person name="Johnson D."/>
            <person name="Joy A.A."/>
            <person name="Kay M."/>
            <person name="Keenan S."/>
            <person name="Kershaw J.K."/>
            <person name="Kimberley A.M."/>
            <person name="King A."/>
            <person name="Knights A."/>
            <person name="Laird G.K."/>
            <person name="Langford C."/>
            <person name="Lawlor S."/>
            <person name="Leongamornlert D.A."/>
            <person name="Leversha M."/>
            <person name="Lloyd C."/>
            <person name="Lloyd D.M."/>
            <person name="Lovell J."/>
            <person name="Martin S."/>
            <person name="Mashreghi-Mohammadi M."/>
            <person name="Matthews L."/>
            <person name="McLaren S."/>
            <person name="McLay K.E."/>
            <person name="McMurray A."/>
            <person name="Milne S."/>
            <person name="Nickerson T."/>
            <person name="Nisbett J."/>
            <person name="Nordsiek G."/>
            <person name="Pearce A.V."/>
            <person name="Peck A.I."/>
            <person name="Porter K.M."/>
            <person name="Pandian R."/>
            <person name="Pelan S."/>
            <person name="Phillimore B."/>
            <person name="Povey S."/>
            <person name="Ramsey Y."/>
            <person name="Rand V."/>
            <person name="Scharfe M."/>
            <person name="Sehra H.K."/>
            <person name="Shownkeen R."/>
            <person name="Sims S.K."/>
            <person name="Skuce C.D."/>
            <person name="Smith M."/>
            <person name="Steward C.A."/>
            <person name="Swarbreck D."/>
            <person name="Sycamore N."/>
            <person name="Tester J."/>
            <person name="Thorpe A."/>
            <person name="Tracey A."/>
            <person name="Tromans A."/>
            <person name="Thomas D.W."/>
            <person name="Wall M."/>
            <person name="Wallis J.M."/>
            <person name="West A.P."/>
            <person name="Whitehead S.L."/>
            <person name="Willey D.L."/>
            <person name="Williams S.A."/>
            <person name="Wilming L."/>
            <person name="Wray P.W."/>
            <person name="Young L."/>
            <person name="Ashurst J.L."/>
            <person name="Coulson A."/>
            <person name="Blocker H."/>
            <person name="Durbin R.M."/>
            <person name="Sulston J.E."/>
            <person name="Hubbard T."/>
            <person name="Jackson M.J."/>
            <person name="Bentley D.R."/>
            <person name="Beck S."/>
            <person name="Rogers J."/>
            <person name="Dunham I."/>
        </authorList>
    </citation>
    <scope>NUCLEOTIDE SEQUENCE [LARGE SCALE GENOMIC DNA]</scope>
</reference>
<reference key="5">
    <citation type="journal article" date="2004" name="Genome Res.">
        <title>The status, quality, and expansion of the NIH full-length cDNA project: the Mammalian Gene Collection (MGC).</title>
        <authorList>
            <consortium name="The MGC Project Team"/>
        </authorList>
    </citation>
    <scope>NUCLEOTIDE SEQUENCE [LARGE SCALE MRNA] (ISOFORM 1)</scope>
    <scope>VARIANT GLN-233</scope>
    <source>
        <tissue>Testis</tissue>
    </source>
</reference>
<reference key="6">
    <citation type="journal article" date="2009" name="Eur. Respir. J.">
        <title>Chronological expression of Ciliated Bronchial Epithelium 1 during pulmonary development.</title>
        <authorList>
            <person name="Haitchi H.M."/>
            <person name="Yoshisue H."/>
            <person name="Ribbene A."/>
            <person name="Wilson S.J."/>
            <person name="Holloway J.W."/>
            <person name="Bucchieri F."/>
            <person name="Hanley N.A."/>
            <person name="Wilson D.I."/>
            <person name="Zummo G."/>
            <person name="Holgate S.T."/>
            <person name="Davies D.E."/>
        </authorList>
    </citation>
    <scope>DEVELOPMENTAL STAGE</scope>
</reference>
<reference key="7">
    <citation type="journal article" date="2017" name="Fertil. Steril.">
        <title>Expression of ciliated bronchial epithelium 1 during human spermatogenesis.</title>
        <authorList>
            <person name="Pleuger C."/>
            <person name="Fietz D."/>
            <person name="Hartmann K."/>
            <person name="Schuppe H.C."/>
            <person name="Weidner W."/>
            <person name="Kliesch S."/>
            <person name="Baker M."/>
            <person name="O'Bryan M.K."/>
            <person name="Bergmann M."/>
        </authorList>
    </citation>
    <scope>SUBCELLULAR LOCATION</scope>
    <scope>TISSUE SPECIFICITY</scope>
    <scope>DEVELOPMENTAL STAGE</scope>
</reference>
<comment type="function">
    <text evidence="1">May participate in intramanchette transport and midpiece formation of the sperm tail. May play a potential role in somatic cell proliferation.</text>
</comment>
<comment type="subunit">
    <text evidence="1">Microtubule inner protein component of sperm flagellar doublet microtubules. Interacts with alpha-tubulin.</text>
</comment>
<comment type="interaction">
    <interactant intactId="EBI-10269322">
        <id>Q8NCR6</id>
    </interactant>
    <interactant intactId="EBI-2809489">
        <id>Q9NQ94</id>
        <label>A1CF</label>
    </interactant>
    <organismsDiffer>false</organismsDiffer>
    <experiments>3</experiments>
</comment>
<comment type="interaction">
    <interactant intactId="EBI-10269322">
        <id>Q8NCR6</id>
    </interactant>
    <interactant intactId="EBI-8643161">
        <id>Q9NX04</id>
        <label>AIRIM</label>
    </interactant>
    <organismsDiffer>false</organismsDiffer>
    <experiments>3</experiments>
</comment>
<comment type="interaction">
    <interactant intactId="EBI-10269322">
        <id>Q8NCR6</id>
    </interactant>
    <interactant intactId="EBI-1050106">
        <id>O75934</id>
        <label>BCAS2</label>
    </interactant>
    <organismsDiffer>false</organismsDiffer>
    <experiments>3</experiments>
</comment>
<comment type="interaction">
    <interactant intactId="EBI-10269322">
        <id>Q8NCR6</id>
    </interactant>
    <interactant intactId="EBI-765407">
        <id>P41182</id>
        <label>BCL6</label>
    </interactant>
    <organismsDiffer>false</organismsDiffer>
    <experiments>3</experiments>
</comment>
<comment type="interaction">
    <interactant intactId="EBI-10269322">
        <id>Q8NCR6</id>
    </interactant>
    <interactant intactId="EBI-12011224">
        <id>Q9NPB3</id>
        <label>CABP2</label>
    </interactant>
    <organismsDiffer>false</organismsDiffer>
    <experiments>3</experiments>
</comment>
<comment type="interaction">
    <interactant intactId="EBI-10269322">
        <id>Q8NCR6</id>
    </interactant>
    <interactant intactId="EBI-744545">
        <id>Q8NEC5</id>
        <label>CATSPER1</label>
    </interactant>
    <organismsDiffer>false</organismsDiffer>
    <experiments>3</experiments>
</comment>
<comment type="interaction">
    <interactant intactId="EBI-10269322">
        <id>Q8NCR6</id>
    </interactant>
    <interactant intactId="EBI-10961624">
        <id>Q2TAC2-2</id>
        <label>CCDC57</label>
    </interactant>
    <organismsDiffer>false</organismsDiffer>
    <experiments>3</experiments>
</comment>
<comment type="interaction">
    <interactant intactId="EBI-10269322">
        <id>Q8NCR6</id>
    </interactant>
    <interactant intactId="EBI-11063830">
        <id>Q86X02</id>
        <label>CDR2L</label>
    </interactant>
    <organismsDiffer>false</organismsDiffer>
    <experiments>3</experiments>
</comment>
<comment type="interaction">
    <interactant intactId="EBI-10269322">
        <id>Q8NCR6</id>
    </interactant>
    <interactant intactId="EBI-10192241">
        <id>O95833</id>
        <label>CLIC3</label>
    </interactant>
    <organismsDiffer>false</organismsDiffer>
    <experiments>3</experiments>
</comment>
<comment type="interaction">
    <interactant intactId="EBI-10269322">
        <id>Q8NCR6</id>
    </interactant>
    <interactant intactId="EBI-747133">
        <id>P27658</id>
        <label>COL8A1</label>
    </interactant>
    <organismsDiffer>false</organismsDiffer>
    <experiments>3</experiments>
</comment>
<comment type="interaction">
    <interactant intactId="EBI-10269322">
        <id>Q8NCR6</id>
    </interactant>
    <interactant intactId="EBI-3867333">
        <id>A8MQ03</id>
        <label>CYSRT1</label>
    </interactant>
    <organismsDiffer>false</organismsDiffer>
    <experiments>3</experiments>
</comment>
<comment type="interaction">
    <interactant intactId="EBI-10269322">
        <id>Q8NCR6</id>
    </interactant>
    <interactant intactId="EBI-740220">
        <id>O14964</id>
        <label>HGS</label>
    </interactant>
    <organismsDiffer>false</organismsDiffer>
    <experiments>3</experiments>
</comment>
<comment type="interaction">
    <interactant intactId="EBI-10269322">
        <id>Q8NCR6</id>
    </interactant>
    <interactant intactId="EBI-7116203">
        <id>O75031</id>
        <label>HSF2BP</label>
    </interactant>
    <organismsDiffer>false</organismsDiffer>
    <experiments>3</experiments>
</comment>
<comment type="interaction">
    <interactant intactId="EBI-10269322">
        <id>Q8NCR6</id>
    </interactant>
    <interactant intactId="EBI-4397613">
        <id>Q7L273</id>
        <label>KCTD9</label>
    </interactant>
    <organismsDiffer>false</organismsDiffer>
    <experiments>3</experiments>
</comment>
<comment type="interaction">
    <interactant intactId="EBI-10269322">
        <id>Q8NCR6</id>
    </interactant>
    <interactant intactId="EBI-1048945">
        <id>Q3LI72</id>
        <label>KRTAP19-5</label>
    </interactant>
    <organismsDiffer>false</organismsDiffer>
    <experiments>3</experiments>
</comment>
<comment type="interaction">
    <interactant intactId="EBI-10269322">
        <id>Q8NCR6</id>
    </interactant>
    <interactant intactId="EBI-12805508">
        <id>Q3LI70</id>
        <label>KRTAP19-6</label>
    </interactant>
    <organismsDiffer>false</organismsDiffer>
    <experiments>3</experiments>
</comment>
<comment type="interaction">
    <interactant intactId="EBI-10269322">
        <id>Q8NCR6</id>
    </interactant>
    <interactant intactId="EBI-1043191">
        <id>Q9BYQ3</id>
        <label>KRTAP9-3</label>
    </interactant>
    <organismsDiffer>false</organismsDiffer>
    <experiments>3</experiments>
</comment>
<comment type="interaction">
    <interactant intactId="EBI-10269322">
        <id>Q8NCR6</id>
    </interactant>
    <interactant intactId="EBI-8025850">
        <id>O14770-4</id>
        <label>MEIS2</label>
    </interactant>
    <organismsDiffer>false</organismsDiffer>
    <experiments>3</experiments>
</comment>
<comment type="interaction">
    <interactant intactId="EBI-10269322">
        <id>Q8NCR6</id>
    </interactant>
    <interactant intactId="EBI-12025760">
        <id>Q86UR1-2</id>
        <label>NOXA1</label>
    </interactant>
    <organismsDiffer>false</organismsDiffer>
    <experiments>3</experiments>
</comment>
<comment type="interaction">
    <interactant intactId="EBI-10269322">
        <id>Q8NCR6</id>
    </interactant>
    <interactant intactId="EBI-79893">
        <id>Q92569</id>
        <label>PIK3R3</label>
    </interactant>
    <organismsDiffer>false</organismsDiffer>
    <experiments>3</experiments>
</comment>
<comment type="interaction">
    <interactant intactId="EBI-10269322">
        <id>Q8NCR6</id>
    </interactant>
    <interactant intactId="EBI-9027467">
        <id>O75360</id>
        <label>PROP1</label>
    </interactant>
    <organismsDiffer>false</organismsDiffer>
    <experiments>3</experiments>
</comment>
<comment type="interaction">
    <interactant intactId="EBI-10269322">
        <id>Q8NCR6</id>
    </interactant>
    <interactant intactId="EBI-740322">
        <id>Q93062</id>
        <label>RBPMS</label>
    </interactant>
    <organismsDiffer>false</organismsDiffer>
    <experiments>3</experiments>
</comment>
<comment type="interaction">
    <interactant intactId="EBI-10269322">
        <id>Q8NCR6</id>
    </interactant>
    <interactant intactId="EBI-742688">
        <id>Q9NZD8</id>
        <label>SPG21</label>
    </interactant>
    <organismsDiffer>false</organismsDiffer>
    <experiments>3</experiments>
</comment>
<comment type="interaction">
    <interactant intactId="EBI-10269322">
        <id>Q8NCR6</id>
    </interactant>
    <interactant intactId="EBI-750487">
        <id>Q8WW24</id>
        <label>TEKT4</label>
    </interactant>
    <organismsDiffer>false</organismsDiffer>
    <experiments>3</experiments>
</comment>
<comment type="interaction">
    <interactant intactId="EBI-10269322">
        <id>Q8NCR6</id>
    </interactant>
    <interactant intactId="EBI-3918381">
        <id>Q96PN8</id>
        <label>TSSK3</label>
    </interactant>
    <organismsDiffer>false</organismsDiffer>
    <experiments>3</experiments>
</comment>
<comment type="interaction">
    <interactant intactId="EBI-10269322">
        <id>Q8NCR6</id>
    </interactant>
    <interactant intactId="EBI-7353612">
        <id>P57075-2</id>
        <label>UBASH3A</label>
    </interactant>
    <organismsDiffer>false</organismsDiffer>
    <experiments>3</experiments>
</comment>
<comment type="subcellular location">
    <subcellularLocation>
        <location evidence="1">Cytoplasm</location>
        <location evidence="1">Cytoskeleton</location>
    </subcellularLocation>
    <subcellularLocation>
        <location evidence="2">Nucleus</location>
    </subcellularLocation>
    <subcellularLocation>
        <location evidence="2">Cytoplasm</location>
    </subcellularLocation>
    <subcellularLocation>
        <location evidence="1">Mitochondrion</location>
    </subcellularLocation>
    <subcellularLocation>
        <location evidence="5">Cytoplasm</location>
        <location evidence="5">Cytoskeleton</location>
        <location evidence="5">Flagellum axoneme</location>
    </subcellularLocation>
    <text evidence="1 2">During spermatid elongation (step 10), localizes along the length of the manchette and later during the elongation process only at the distal ends of spermatid manchette (step 12). In late elongated spermatids (step 16), in the final steps of spermiogenesis, localization is restricted to the midpiece of the flagellum. Localizes at the contractile ring in dividing cells (By similarity). Predominantly perinuclear in bronchial epithelial cells but also detected in the nucleus in some primary epithelial cells and in a number of cell lines (PubMed:15242845).</text>
</comment>
<comment type="alternative products">
    <event type="alternative splicing"/>
    <isoform>
        <id>Q8NCR6-1</id>
        <name>1</name>
        <name>NYD-SP22 v1</name>
        <sequence type="displayed"/>
    </isoform>
    <isoform>
        <id>Q8NCR6-2</id>
        <name>2</name>
        <sequence type="described" ref="VSP_027169 VSP_027171"/>
    </isoform>
    <isoform>
        <id>Q8NCR6-3</id>
        <name>3</name>
        <name>NYD-SP22 v3</name>
        <sequence type="described" ref="VSP_027169 VSP_027170"/>
    </isoform>
    <isoform>
        <id>Q8NCR6-4</id>
        <name>4</name>
        <name>CBE1 ORF2</name>
        <sequence type="described" ref="VSP_027169 VSP_042861"/>
    </isoform>
    <isoform>
        <id>Q8NCR6-5</id>
        <name>5</name>
        <name>CBE1 ORF1</name>
        <name>NYD-SP22 v2</name>
        <sequence type="described" ref="VSP_027169"/>
    </isoform>
</comment>
<comment type="tissue specificity">
    <text evidence="2 5">Expressed in testis (PubMed:28601408). Strongly expressed in ciliated epithelial cells with lower levels in goblet cells (at protein level) (PubMed:15242845).</text>
</comment>
<comment type="developmental stage">
    <text evidence="2 4 5">Expressed during in vitro differentiation of bronchial epithelial cells. In fetal lung, expression is barely detectable at 10 weeks post-conception but is strong in airway epithelium at 12.3 weeks post-conception (PubMed:15242845, PubMed:19213785). Expressed in late pachytene spermatocytes (PubMed:28601408). Expressed within the flagellum of elongating spermatids from stage V up to the spermiation in stage II (PubMed:28601408).</text>
</comment>
<comment type="induction">
    <text evidence="2">Down-regulated by IL13.</text>
</comment>
<comment type="similarity">
    <text evidence="9">Belongs to the SPMIP6 family.</text>
</comment>
<feature type="chain" id="PRO_0000296258" description="Sperm microtubule inner protein 6">
    <location>
        <begin position="1"/>
        <end position="262"/>
    </location>
</feature>
<feature type="splice variant" id="VSP_027169" description="In isoform 2, isoform 3, isoform 4 and isoform 5." evidence="6 7 8">
    <location>
        <begin position="1"/>
        <end position="135"/>
    </location>
</feature>
<feature type="splice variant" id="VSP_027170" description="In isoform 3." evidence="8">
    <original>DPLPGRLPFHGYESACSGRHYCLRGMDYYASGAPCTDRRLRPWCREQPTMCTSLRAPARNAVCCYNSPAVILPISEP</original>
    <variation>PPYEHRPGMQCAVTTPPPSYYPYPNLRWDTSHFKKSGGPQRNNYVIHPEFVSETYPDYRCW</variation>
    <location>
        <begin position="186"/>
        <end position="262"/>
    </location>
</feature>
<feature type="splice variant" id="VSP_027171" description="In isoform 2." evidence="6">
    <original>MCTSLRAPARNAVCCYNSPAVILPISEP</original>
    <variation>VRFAGLRPPQPGSTPHKPRPRTPPPSSPASFRAGPQPALAPRCTLSRPCRVPPSGSKA</variation>
    <location>
        <begin position="235"/>
        <end position="262"/>
    </location>
</feature>
<feature type="splice variant" id="VSP_042861" description="In isoform 4." evidence="7">
    <original>MCTSLRAPARNAVCCYNSPAVILPISEP</original>
    <variation>VRCVPPYEHRPGMQCAVTTPPPSYYPYPNLRWDTSHFKKSGGPQRNNYVIHPEFVSETYPDYRCW</variation>
    <location>
        <begin position="235"/>
        <end position="262"/>
    </location>
</feature>
<feature type="sequence variant" id="VAR_034626" description="In dbSNP:rs17852663." evidence="3">
    <original>P</original>
    <variation>Q</variation>
    <location>
        <position position="233"/>
    </location>
</feature>
<feature type="mutagenesis site" description="Predominantly cytoplasmic rather than nuclear localization." evidence="2">
    <original>RR</original>
    <variation>AA</variation>
    <location>
        <begin position="223"/>
        <end position="224"/>
    </location>
</feature>
<feature type="sequence conflict" description="In Ref. 2; AAK53410." evidence="9" ref="2">
    <original>C</original>
    <variation>Y</variation>
    <location sequence="Q8NCR6-3">
        <position position="61"/>
    </location>
</feature>